<accession>Q57T01</accession>
<proteinExistence type="inferred from homology"/>
<sequence>MRKNTYAMRYVAGQPAERILPPGSFASIGQALPAGEPLSSEERIRILVWNIFKQQRAEWLSVLKNYGKDAHLVLLQEAQTTPELVQFATANYLAADQVPAFVLPQHPSGVMTLSAAHPVYCCPLREREPILRLAKSALVTVYPLPDTRLLMVVNVHAVNFSLGVDVYSKQLLPIGDQIAHHSGPVIMAGDFNAWSRPRMNALYRFAREMSLRQVRFTDDQRRRAFGRPLDFVFYRGLNVNEASVLVTRASDHNPLLVEFSPGKPEQ</sequence>
<reference key="1">
    <citation type="journal article" date="2005" name="Nucleic Acids Res.">
        <title>The genome sequence of Salmonella enterica serovar Choleraesuis, a highly invasive and resistant zoonotic pathogen.</title>
        <authorList>
            <person name="Chiu C.-H."/>
            <person name="Tang P."/>
            <person name="Chu C."/>
            <person name="Hu S."/>
            <person name="Bao Q."/>
            <person name="Yu J."/>
            <person name="Chou Y.-Y."/>
            <person name="Wang H.-S."/>
            <person name="Lee Y.-S."/>
        </authorList>
    </citation>
    <scope>NUCLEOTIDE SEQUENCE [LARGE SCALE GENOMIC DNA]</scope>
    <source>
        <strain>SC-B67</strain>
    </source>
</reference>
<name>YAFD_SALCH</name>
<evidence type="ECO:0000255" key="1">
    <source>
        <dbReference type="HAMAP-Rule" id="MF_01119"/>
    </source>
</evidence>
<dbReference type="EMBL" id="AE017220">
    <property type="protein sequence ID" value="AAX64160.1"/>
    <property type="molecule type" value="Genomic_DNA"/>
</dbReference>
<dbReference type="RefSeq" id="WP_001230970.1">
    <property type="nucleotide sequence ID" value="NC_006905.1"/>
</dbReference>
<dbReference type="SMR" id="Q57T01"/>
<dbReference type="KEGG" id="sec:SCH_0254"/>
<dbReference type="HOGENOM" id="CLU_083563_0_0_6"/>
<dbReference type="Proteomes" id="UP000000538">
    <property type="component" value="Chromosome"/>
</dbReference>
<dbReference type="GO" id="GO:0005737">
    <property type="term" value="C:cytoplasm"/>
    <property type="evidence" value="ECO:0007669"/>
    <property type="project" value="UniProtKB-SubCell"/>
</dbReference>
<dbReference type="GO" id="GO:0003824">
    <property type="term" value="F:catalytic activity"/>
    <property type="evidence" value="ECO:0007669"/>
    <property type="project" value="InterPro"/>
</dbReference>
<dbReference type="Gene3D" id="3.60.10.10">
    <property type="entry name" value="Endonuclease/exonuclease/phosphatase"/>
    <property type="match status" value="1"/>
</dbReference>
<dbReference type="HAMAP" id="MF_01119">
    <property type="entry name" value="UPF0294"/>
    <property type="match status" value="1"/>
</dbReference>
<dbReference type="InterPro" id="IPR036691">
    <property type="entry name" value="Endo/exonu/phosph_ase_sf"/>
</dbReference>
<dbReference type="InterPro" id="IPR005135">
    <property type="entry name" value="Endo/exonuclease/phosphatase"/>
</dbReference>
<dbReference type="InterPro" id="IPR022958">
    <property type="entry name" value="UPF0294"/>
</dbReference>
<dbReference type="NCBIfam" id="NF003839">
    <property type="entry name" value="PRK05421.1-1"/>
    <property type="match status" value="1"/>
</dbReference>
<dbReference type="NCBIfam" id="NF003840">
    <property type="entry name" value="PRK05421.1-2"/>
    <property type="match status" value="1"/>
</dbReference>
<dbReference type="NCBIfam" id="NF003841">
    <property type="entry name" value="PRK05421.1-3"/>
    <property type="match status" value="1"/>
</dbReference>
<dbReference type="NCBIfam" id="NF003842">
    <property type="entry name" value="PRK05421.1-4"/>
    <property type="match status" value="1"/>
</dbReference>
<dbReference type="Pfam" id="PF03372">
    <property type="entry name" value="Exo_endo_phos"/>
    <property type="match status" value="1"/>
</dbReference>
<dbReference type="SUPFAM" id="SSF56219">
    <property type="entry name" value="DNase I-like"/>
    <property type="match status" value="1"/>
</dbReference>
<gene>
    <name evidence="1" type="primary">yafD</name>
    <name type="ordered locus">SCH_0254</name>
</gene>
<feature type="chain" id="PRO_1000065253" description="UPF0294 protein YafD">
    <location>
        <begin position="1"/>
        <end position="266"/>
    </location>
</feature>
<protein>
    <recommendedName>
        <fullName evidence="1">UPF0294 protein YafD</fullName>
    </recommendedName>
</protein>
<organism>
    <name type="scientific">Salmonella choleraesuis (strain SC-B67)</name>
    <dbReference type="NCBI Taxonomy" id="321314"/>
    <lineage>
        <taxon>Bacteria</taxon>
        <taxon>Pseudomonadati</taxon>
        <taxon>Pseudomonadota</taxon>
        <taxon>Gammaproteobacteria</taxon>
        <taxon>Enterobacterales</taxon>
        <taxon>Enterobacteriaceae</taxon>
        <taxon>Salmonella</taxon>
    </lineage>
</organism>
<keyword id="KW-0963">Cytoplasm</keyword>
<comment type="subcellular location">
    <subcellularLocation>
        <location evidence="1">Cytoplasm</location>
    </subcellularLocation>
</comment>
<comment type="similarity">
    <text evidence="1">Belongs to the UPF0294 family.</text>
</comment>